<organism>
    <name type="scientific">Pectobacterium carotovorum subsp. carotovorum (strain PC1)</name>
    <dbReference type="NCBI Taxonomy" id="561230"/>
    <lineage>
        <taxon>Bacteria</taxon>
        <taxon>Pseudomonadati</taxon>
        <taxon>Pseudomonadota</taxon>
        <taxon>Gammaproteobacteria</taxon>
        <taxon>Enterobacterales</taxon>
        <taxon>Pectobacteriaceae</taxon>
        <taxon>Pectobacterium</taxon>
    </lineage>
</organism>
<keyword id="KW-0963">Cytoplasm</keyword>
<keyword id="KW-0648">Protein biosynthesis</keyword>
<gene>
    <name evidence="1" type="primary">frr</name>
    <name type="ordered locus">PC1_0944</name>
</gene>
<feature type="chain" id="PRO_1000202106" description="Ribosome-recycling factor">
    <location>
        <begin position="1"/>
        <end position="185"/>
    </location>
</feature>
<proteinExistence type="inferred from homology"/>
<dbReference type="EMBL" id="CP001657">
    <property type="protein sequence ID" value="ACT11994.1"/>
    <property type="molecule type" value="Genomic_DNA"/>
</dbReference>
<dbReference type="RefSeq" id="WP_012773632.1">
    <property type="nucleotide sequence ID" value="NC_012917.1"/>
</dbReference>
<dbReference type="SMR" id="C6DAI6"/>
<dbReference type="STRING" id="561230.PC1_0944"/>
<dbReference type="GeneID" id="67795279"/>
<dbReference type="KEGG" id="pct:PC1_0944"/>
<dbReference type="eggNOG" id="COG0233">
    <property type="taxonomic scope" value="Bacteria"/>
</dbReference>
<dbReference type="HOGENOM" id="CLU_073981_2_0_6"/>
<dbReference type="OrthoDB" id="9804006at2"/>
<dbReference type="Proteomes" id="UP000002736">
    <property type="component" value="Chromosome"/>
</dbReference>
<dbReference type="GO" id="GO:0005829">
    <property type="term" value="C:cytosol"/>
    <property type="evidence" value="ECO:0007669"/>
    <property type="project" value="GOC"/>
</dbReference>
<dbReference type="GO" id="GO:0043023">
    <property type="term" value="F:ribosomal large subunit binding"/>
    <property type="evidence" value="ECO:0007669"/>
    <property type="project" value="TreeGrafter"/>
</dbReference>
<dbReference type="GO" id="GO:0002184">
    <property type="term" value="P:cytoplasmic translational termination"/>
    <property type="evidence" value="ECO:0007669"/>
    <property type="project" value="TreeGrafter"/>
</dbReference>
<dbReference type="CDD" id="cd00520">
    <property type="entry name" value="RRF"/>
    <property type="match status" value="1"/>
</dbReference>
<dbReference type="FunFam" id="1.10.132.20:FF:000001">
    <property type="entry name" value="Ribosome-recycling factor"/>
    <property type="match status" value="1"/>
</dbReference>
<dbReference type="FunFam" id="3.30.1360.40:FF:000001">
    <property type="entry name" value="Ribosome-recycling factor"/>
    <property type="match status" value="1"/>
</dbReference>
<dbReference type="Gene3D" id="3.30.1360.40">
    <property type="match status" value="1"/>
</dbReference>
<dbReference type="Gene3D" id="1.10.132.20">
    <property type="entry name" value="Ribosome-recycling factor"/>
    <property type="match status" value="1"/>
</dbReference>
<dbReference type="HAMAP" id="MF_00040">
    <property type="entry name" value="RRF"/>
    <property type="match status" value="1"/>
</dbReference>
<dbReference type="InterPro" id="IPR002661">
    <property type="entry name" value="Ribosome_recyc_fac"/>
</dbReference>
<dbReference type="InterPro" id="IPR023584">
    <property type="entry name" value="Ribosome_recyc_fac_dom"/>
</dbReference>
<dbReference type="InterPro" id="IPR036191">
    <property type="entry name" value="RRF_sf"/>
</dbReference>
<dbReference type="NCBIfam" id="TIGR00496">
    <property type="entry name" value="frr"/>
    <property type="match status" value="1"/>
</dbReference>
<dbReference type="PANTHER" id="PTHR20982:SF3">
    <property type="entry name" value="MITOCHONDRIAL RIBOSOME RECYCLING FACTOR PSEUDO 1"/>
    <property type="match status" value="1"/>
</dbReference>
<dbReference type="PANTHER" id="PTHR20982">
    <property type="entry name" value="RIBOSOME RECYCLING FACTOR"/>
    <property type="match status" value="1"/>
</dbReference>
<dbReference type="Pfam" id="PF01765">
    <property type="entry name" value="RRF"/>
    <property type="match status" value="1"/>
</dbReference>
<dbReference type="SUPFAM" id="SSF55194">
    <property type="entry name" value="Ribosome recycling factor, RRF"/>
    <property type="match status" value="1"/>
</dbReference>
<protein>
    <recommendedName>
        <fullName evidence="1">Ribosome-recycling factor</fullName>
        <shortName evidence="1">RRF</shortName>
    </recommendedName>
    <alternativeName>
        <fullName evidence="1">Ribosome-releasing factor</fullName>
    </alternativeName>
</protein>
<sequence>MTNEIRKDAETRMDKCVEAFKNQISKIRTGRASPSILDGIQVEYYGSATPLRQVANVVVEDSRTLAITVFDRTLGPAVEKAIMASDLGLNPSSAGTVIRVPLPPLTEERRKDLIKVVRGEAEQGRVSVRNVRRDANDKLKALLKDKAISEDEERRAQDDVQKLTDNFIKKVDTALAEKEAELMEF</sequence>
<reference key="1">
    <citation type="submission" date="2009-07" db="EMBL/GenBank/DDBJ databases">
        <title>Complete sequence of Pectobacterium carotovorum subsp. carotovorum PC1.</title>
        <authorList>
            <consortium name="US DOE Joint Genome Institute"/>
            <person name="Lucas S."/>
            <person name="Copeland A."/>
            <person name="Lapidus A."/>
            <person name="Glavina del Rio T."/>
            <person name="Tice H."/>
            <person name="Bruce D."/>
            <person name="Goodwin L."/>
            <person name="Pitluck S."/>
            <person name="Munk A.C."/>
            <person name="Brettin T."/>
            <person name="Detter J.C."/>
            <person name="Han C."/>
            <person name="Tapia R."/>
            <person name="Larimer F."/>
            <person name="Land M."/>
            <person name="Hauser L."/>
            <person name="Kyrpides N."/>
            <person name="Mikhailova N."/>
            <person name="Balakrishnan V."/>
            <person name="Glasner J."/>
            <person name="Perna N.T."/>
        </authorList>
    </citation>
    <scope>NUCLEOTIDE SEQUENCE [LARGE SCALE GENOMIC DNA]</scope>
    <source>
        <strain>PC1</strain>
    </source>
</reference>
<comment type="function">
    <text evidence="1">Responsible for the release of ribosomes from messenger RNA at the termination of protein biosynthesis. May increase the efficiency of translation by recycling ribosomes from one round of translation to another.</text>
</comment>
<comment type="subcellular location">
    <subcellularLocation>
        <location evidence="1">Cytoplasm</location>
    </subcellularLocation>
</comment>
<comment type="similarity">
    <text evidence="1">Belongs to the RRF family.</text>
</comment>
<accession>C6DAI6</accession>
<name>RRF_PECCP</name>
<evidence type="ECO:0000255" key="1">
    <source>
        <dbReference type="HAMAP-Rule" id="MF_00040"/>
    </source>
</evidence>